<accession>Q9FJR1</accession>
<accession>Q8RWF3</accession>
<keyword id="KW-0106">Calcium</keyword>
<keyword id="KW-1015">Disulfide bond</keyword>
<keyword id="KW-0325">Glycoprotein</keyword>
<keyword id="KW-0349">Heme</keyword>
<keyword id="KW-0376">Hydrogen peroxide</keyword>
<keyword id="KW-0408">Iron</keyword>
<keyword id="KW-0479">Metal-binding</keyword>
<keyword id="KW-0560">Oxidoreductase</keyword>
<keyword id="KW-0575">Peroxidase</keyword>
<keyword id="KW-1185">Reference proteome</keyword>
<keyword id="KW-0964">Secreted</keyword>
<keyword id="KW-0732">Signal</keyword>
<dbReference type="EC" id="1.11.1.7"/>
<dbReference type="EMBL" id="AB013394">
    <property type="protein sequence ID" value="BAB10239.1"/>
    <property type="status" value="ALT_INIT"/>
    <property type="molecule type" value="Genomic_DNA"/>
</dbReference>
<dbReference type="EMBL" id="CP002688">
    <property type="protein sequence ID" value="AED95456.1"/>
    <property type="molecule type" value="Genomic_DNA"/>
</dbReference>
<dbReference type="EMBL" id="AY093131">
    <property type="protein sequence ID" value="AAM13130.1"/>
    <property type="molecule type" value="mRNA"/>
</dbReference>
<dbReference type="EMBL" id="BT008821">
    <property type="protein sequence ID" value="AAP68260.1"/>
    <property type="molecule type" value="mRNA"/>
</dbReference>
<dbReference type="EMBL" id="AY088108">
    <property type="protein sequence ID" value="AAM65654.1"/>
    <property type="molecule type" value="mRNA"/>
</dbReference>
<dbReference type="RefSeq" id="NP_568674.1">
    <property type="nucleotide sequence ID" value="NM_124071.3"/>
</dbReference>
<dbReference type="SMR" id="Q9FJR1"/>
<dbReference type="BioGRID" id="19994">
    <property type="interactions" value="1"/>
</dbReference>
<dbReference type="FunCoup" id="Q9FJR1">
    <property type="interactions" value="169"/>
</dbReference>
<dbReference type="STRING" id="3702.Q9FJR1"/>
<dbReference type="PeroxiBase" id="231">
    <property type="entry name" value="AtPrx65"/>
</dbReference>
<dbReference type="GlyCosmos" id="Q9FJR1">
    <property type="glycosylation" value="4 sites, No reported glycans"/>
</dbReference>
<dbReference type="GlyGen" id="Q9FJR1">
    <property type="glycosylation" value="4 sites"/>
</dbReference>
<dbReference type="PaxDb" id="3702-AT5G47000.1"/>
<dbReference type="ProteomicsDB" id="236769"/>
<dbReference type="EnsemblPlants" id="AT5G47000.1">
    <property type="protein sequence ID" value="AT5G47000.1"/>
    <property type="gene ID" value="AT5G47000"/>
</dbReference>
<dbReference type="GeneID" id="834746"/>
<dbReference type="Gramene" id="AT5G47000.1">
    <property type="protein sequence ID" value="AT5G47000.1"/>
    <property type="gene ID" value="AT5G47000"/>
</dbReference>
<dbReference type="KEGG" id="ath:AT5G47000"/>
<dbReference type="Araport" id="AT5G47000"/>
<dbReference type="TAIR" id="AT5G47000"/>
<dbReference type="eggNOG" id="ENOG502QR74">
    <property type="taxonomic scope" value="Eukaryota"/>
</dbReference>
<dbReference type="HOGENOM" id="CLU_010543_0_3_1"/>
<dbReference type="InParanoid" id="Q9FJR1"/>
<dbReference type="OMA" id="NVPMANQ"/>
<dbReference type="OrthoDB" id="2113341at2759"/>
<dbReference type="PhylomeDB" id="Q9FJR1"/>
<dbReference type="BioCyc" id="ARA:AT5G47000-MONOMER"/>
<dbReference type="PRO" id="PR:Q9FJR1"/>
<dbReference type="Proteomes" id="UP000006548">
    <property type="component" value="Chromosome 5"/>
</dbReference>
<dbReference type="ExpressionAtlas" id="Q9FJR1">
    <property type="expression patterns" value="baseline and differential"/>
</dbReference>
<dbReference type="GO" id="GO:0005576">
    <property type="term" value="C:extracellular region"/>
    <property type="evidence" value="ECO:0007669"/>
    <property type="project" value="UniProtKB-SubCell"/>
</dbReference>
<dbReference type="GO" id="GO:0020037">
    <property type="term" value="F:heme binding"/>
    <property type="evidence" value="ECO:0007669"/>
    <property type="project" value="InterPro"/>
</dbReference>
<dbReference type="GO" id="GO:0140825">
    <property type="term" value="F:lactoperoxidase activity"/>
    <property type="evidence" value="ECO:0007669"/>
    <property type="project" value="UniProtKB-EC"/>
</dbReference>
<dbReference type="GO" id="GO:0046872">
    <property type="term" value="F:metal ion binding"/>
    <property type="evidence" value="ECO:0007669"/>
    <property type="project" value="UniProtKB-KW"/>
</dbReference>
<dbReference type="GO" id="GO:0009044">
    <property type="term" value="F:xylan 1,4-beta-xylosidase activity"/>
    <property type="evidence" value="ECO:0000304"/>
    <property type="project" value="TAIR"/>
</dbReference>
<dbReference type="GO" id="GO:0042744">
    <property type="term" value="P:hydrogen peroxide catabolic process"/>
    <property type="evidence" value="ECO:0007669"/>
    <property type="project" value="UniProtKB-KW"/>
</dbReference>
<dbReference type="GO" id="GO:0006979">
    <property type="term" value="P:response to oxidative stress"/>
    <property type="evidence" value="ECO:0007669"/>
    <property type="project" value="InterPro"/>
</dbReference>
<dbReference type="CDD" id="cd00693">
    <property type="entry name" value="secretory_peroxidase"/>
    <property type="match status" value="1"/>
</dbReference>
<dbReference type="FunFam" id="1.10.420.10:FF:000007">
    <property type="entry name" value="Peroxidase"/>
    <property type="match status" value="1"/>
</dbReference>
<dbReference type="FunFam" id="1.10.520.10:FF:000008">
    <property type="entry name" value="Peroxidase"/>
    <property type="match status" value="1"/>
</dbReference>
<dbReference type="Gene3D" id="1.10.520.10">
    <property type="match status" value="1"/>
</dbReference>
<dbReference type="Gene3D" id="1.10.420.10">
    <property type="entry name" value="Peroxidase, domain 2"/>
    <property type="match status" value="1"/>
</dbReference>
<dbReference type="InterPro" id="IPR002016">
    <property type="entry name" value="Haem_peroxidase"/>
</dbReference>
<dbReference type="InterPro" id="IPR010255">
    <property type="entry name" value="Haem_peroxidase_sf"/>
</dbReference>
<dbReference type="InterPro" id="IPR000823">
    <property type="entry name" value="Peroxidase_pln"/>
</dbReference>
<dbReference type="InterPro" id="IPR019794">
    <property type="entry name" value="Peroxidases_AS"/>
</dbReference>
<dbReference type="InterPro" id="IPR019793">
    <property type="entry name" value="Peroxidases_heam-ligand_BS"/>
</dbReference>
<dbReference type="InterPro" id="IPR033905">
    <property type="entry name" value="Secretory_peroxidase"/>
</dbReference>
<dbReference type="PANTHER" id="PTHR31517">
    <property type="match status" value="1"/>
</dbReference>
<dbReference type="PANTHER" id="PTHR31517:SF42">
    <property type="entry name" value="PEROXIDASE 65"/>
    <property type="match status" value="1"/>
</dbReference>
<dbReference type="Pfam" id="PF00141">
    <property type="entry name" value="peroxidase"/>
    <property type="match status" value="1"/>
</dbReference>
<dbReference type="PRINTS" id="PR00458">
    <property type="entry name" value="PEROXIDASE"/>
</dbReference>
<dbReference type="PRINTS" id="PR00461">
    <property type="entry name" value="PLPEROXIDASE"/>
</dbReference>
<dbReference type="SUPFAM" id="SSF48113">
    <property type="entry name" value="Heme-dependent peroxidases"/>
    <property type="match status" value="1"/>
</dbReference>
<dbReference type="PROSITE" id="PS00435">
    <property type="entry name" value="PEROXIDASE_1"/>
    <property type="match status" value="1"/>
</dbReference>
<dbReference type="PROSITE" id="PS00436">
    <property type="entry name" value="PEROXIDASE_2"/>
    <property type="match status" value="1"/>
</dbReference>
<dbReference type="PROSITE" id="PS50873">
    <property type="entry name" value="PEROXIDASE_4"/>
    <property type="match status" value="1"/>
</dbReference>
<reference key="1">
    <citation type="journal article" date="1998" name="DNA Res.">
        <title>Structural analysis of Arabidopsis thaliana chromosome 5. VI. Sequence features of the regions of 1,367,185 bp covered by 19 physically assigned P1 and TAC clones.</title>
        <authorList>
            <person name="Kotani H."/>
            <person name="Nakamura Y."/>
            <person name="Sato S."/>
            <person name="Asamizu E."/>
            <person name="Kaneko T."/>
            <person name="Miyajima N."/>
            <person name="Tabata S."/>
        </authorList>
    </citation>
    <scope>NUCLEOTIDE SEQUENCE [LARGE SCALE GENOMIC DNA]</scope>
    <source>
        <strain>cv. Columbia</strain>
    </source>
</reference>
<reference key="2">
    <citation type="journal article" date="2017" name="Plant J.">
        <title>Araport11: a complete reannotation of the Arabidopsis thaliana reference genome.</title>
        <authorList>
            <person name="Cheng C.Y."/>
            <person name="Krishnakumar V."/>
            <person name="Chan A.P."/>
            <person name="Thibaud-Nissen F."/>
            <person name="Schobel S."/>
            <person name="Town C.D."/>
        </authorList>
    </citation>
    <scope>GENOME REANNOTATION</scope>
    <source>
        <strain>cv. Columbia</strain>
    </source>
</reference>
<reference key="3">
    <citation type="journal article" date="2003" name="Science">
        <title>Empirical analysis of transcriptional activity in the Arabidopsis genome.</title>
        <authorList>
            <person name="Yamada K."/>
            <person name="Lim J."/>
            <person name="Dale J.M."/>
            <person name="Chen H."/>
            <person name="Shinn P."/>
            <person name="Palm C.J."/>
            <person name="Southwick A.M."/>
            <person name="Wu H.C."/>
            <person name="Kim C.J."/>
            <person name="Nguyen M."/>
            <person name="Pham P.K."/>
            <person name="Cheuk R.F."/>
            <person name="Karlin-Newmann G."/>
            <person name="Liu S.X."/>
            <person name="Lam B."/>
            <person name="Sakano H."/>
            <person name="Wu T."/>
            <person name="Yu G."/>
            <person name="Miranda M."/>
            <person name="Quach H.L."/>
            <person name="Tripp M."/>
            <person name="Chang C.H."/>
            <person name="Lee J.M."/>
            <person name="Toriumi M.J."/>
            <person name="Chan M.M."/>
            <person name="Tang C.C."/>
            <person name="Onodera C.S."/>
            <person name="Deng J.M."/>
            <person name="Akiyama K."/>
            <person name="Ansari Y."/>
            <person name="Arakawa T."/>
            <person name="Banh J."/>
            <person name="Banno F."/>
            <person name="Bowser L."/>
            <person name="Brooks S.Y."/>
            <person name="Carninci P."/>
            <person name="Chao Q."/>
            <person name="Choy N."/>
            <person name="Enju A."/>
            <person name="Goldsmith A.D."/>
            <person name="Gurjal M."/>
            <person name="Hansen N.F."/>
            <person name="Hayashizaki Y."/>
            <person name="Johnson-Hopson C."/>
            <person name="Hsuan V.W."/>
            <person name="Iida K."/>
            <person name="Karnes M."/>
            <person name="Khan S."/>
            <person name="Koesema E."/>
            <person name="Ishida J."/>
            <person name="Jiang P.X."/>
            <person name="Jones T."/>
            <person name="Kawai J."/>
            <person name="Kamiya A."/>
            <person name="Meyers C."/>
            <person name="Nakajima M."/>
            <person name="Narusaka M."/>
            <person name="Seki M."/>
            <person name="Sakurai T."/>
            <person name="Satou M."/>
            <person name="Tamse R."/>
            <person name="Vaysberg M."/>
            <person name="Wallender E.K."/>
            <person name="Wong C."/>
            <person name="Yamamura Y."/>
            <person name="Yuan S."/>
            <person name="Shinozaki K."/>
            <person name="Davis R.W."/>
            <person name="Theologis A."/>
            <person name="Ecker J.R."/>
        </authorList>
    </citation>
    <scope>NUCLEOTIDE SEQUENCE [LARGE SCALE MRNA]</scope>
    <source>
        <strain>cv. Columbia</strain>
    </source>
</reference>
<reference key="4">
    <citation type="submission" date="2002-03" db="EMBL/GenBank/DDBJ databases">
        <title>Full-length cDNA from Arabidopsis thaliana.</title>
        <authorList>
            <person name="Brover V.V."/>
            <person name="Troukhan M.E."/>
            <person name="Alexandrov N.A."/>
            <person name="Lu Y.-P."/>
            <person name="Flavell R.B."/>
            <person name="Feldmann K.A."/>
        </authorList>
    </citation>
    <scope>NUCLEOTIDE SEQUENCE [LARGE SCALE MRNA]</scope>
</reference>
<reference key="5">
    <citation type="journal article" date="2002" name="Gene">
        <title>Analysis and expression of the class III peroxidase large gene family in Arabidopsis thaliana.</title>
        <authorList>
            <person name="Tognolli M."/>
            <person name="Penel C."/>
            <person name="Greppin H."/>
            <person name="Simon P."/>
        </authorList>
    </citation>
    <scope>GENE FAMILY ORGANIZATION</scope>
    <scope>NOMENCLATURE</scope>
    <source>
        <strain>cv. Columbia</strain>
    </source>
</reference>
<organism>
    <name type="scientific">Arabidopsis thaliana</name>
    <name type="common">Mouse-ear cress</name>
    <dbReference type="NCBI Taxonomy" id="3702"/>
    <lineage>
        <taxon>Eukaryota</taxon>
        <taxon>Viridiplantae</taxon>
        <taxon>Streptophyta</taxon>
        <taxon>Embryophyta</taxon>
        <taxon>Tracheophyta</taxon>
        <taxon>Spermatophyta</taxon>
        <taxon>Magnoliopsida</taxon>
        <taxon>eudicotyledons</taxon>
        <taxon>Gunneridae</taxon>
        <taxon>Pentapetalae</taxon>
        <taxon>rosids</taxon>
        <taxon>malvids</taxon>
        <taxon>Brassicales</taxon>
        <taxon>Brassicaceae</taxon>
        <taxon>Camelineae</taxon>
        <taxon>Arabidopsis</taxon>
    </lineage>
</organism>
<gene>
    <name type="primary">PER65</name>
    <name type="synonym">P65</name>
    <name type="ordered locus">At5g47000</name>
    <name type="ORF">MQD22.14</name>
</gene>
<protein>
    <recommendedName>
        <fullName>Peroxidase 65</fullName>
        <shortName>Atperox P65</shortName>
        <ecNumber>1.11.1.7</ecNumber>
    </recommendedName>
    <alternativeName>
        <fullName>ATP43</fullName>
    </alternativeName>
</protein>
<comment type="function">
    <text>Removal of H(2)O(2), oxidation of toxic reductants, biosynthesis and degradation of lignin, suberization, auxin catabolism, response to environmental stresses such as wounding, pathogen attack and oxidative stress. These functions might be dependent on each isozyme/isoform in each plant tissue.</text>
</comment>
<comment type="catalytic activity">
    <reaction>
        <text>2 a phenolic donor + H2O2 = 2 a phenolic radical donor + 2 H2O</text>
        <dbReference type="Rhea" id="RHEA:56136"/>
        <dbReference type="ChEBI" id="CHEBI:15377"/>
        <dbReference type="ChEBI" id="CHEBI:16240"/>
        <dbReference type="ChEBI" id="CHEBI:139520"/>
        <dbReference type="ChEBI" id="CHEBI:139521"/>
        <dbReference type="EC" id="1.11.1.7"/>
    </reaction>
</comment>
<comment type="cofactor">
    <cofactor evidence="2">
        <name>heme b</name>
        <dbReference type="ChEBI" id="CHEBI:60344"/>
    </cofactor>
    <text evidence="2">Binds 1 heme b (iron(II)-protoporphyrin IX) group per subunit.</text>
</comment>
<comment type="cofactor">
    <cofactor evidence="2">
        <name>Ca(2+)</name>
        <dbReference type="ChEBI" id="CHEBI:29108"/>
    </cofactor>
    <text evidence="2">Binds 2 calcium ions per subunit.</text>
</comment>
<comment type="subcellular location">
    <subcellularLocation>
        <location evidence="2">Secreted</location>
    </subcellularLocation>
</comment>
<comment type="miscellaneous">
    <text>There are 73 peroxidase genes in A.thaliana.</text>
</comment>
<comment type="similarity">
    <text evidence="2">Belongs to the peroxidase family. Classical plant (class III) peroxidase subfamily.</text>
</comment>
<comment type="sequence caution" evidence="4">
    <conflict type="erroneous initiation">
        <sequence resource="EMBL-CDS" id="BAB10239"/>
    </conflict>
</comment>
<name>PER65_ARATH</name>
<proteinExistence type="evidence at transcript level"/>
<evidence type="ECO:0000255" key="1"/>
<evidence type="ECO:0000255" key="2">
    <source>
        <dbReference type="PROSITE-ProRule" id="PRU00297"/>
    </source>
</evidence>
<evidence type="ECO:0000255" key="3">
    <source>
        <dbReference type="PROSITE-ProRule" id="PRU10012"/>
    </source>
</evidence>
<evidence type="ECO:0000305" key="4"/>
<feature type="signal peptide" evidence="1">
    <location>
        <begin position="1"/>
        <end position="28"/>
    </location>
</feature>
<feature type="chain" id="PRO_0000023730" description="Peroxidase 65">
    <location>
        <begin position="29"/>
        <end position="334"/>
    </location>
</feature>
<feature type="active site" description="Proton acceptor" evidence="2 3">
    <location>
        <position position="73"/>
    </location>
</feature>
<feature type="binding site" evidence="2">
    <location>
        <position position="74"/>
    </location>
    <ligand>
        <name>Ca(2+)</name>
        <dbReference type="ChEBI" id="CHEBI:29108"/>
        <label>1</label>
    </ligand>
</feature>
<feature type="binding site" evidence="2">
    <location>
        <position position="79"/>
    </location>
    <ligand>
        <name>Ca(2+)</name>
        <dbReference type="ChEBI" id="CHEBI:29108"/>
        <label>1</label>
    </ligand>
</feature>
<feature type="binding site" evidence="2">
    <location>
        <position position="81"/>
    </location>
    <ligand>
        <name>Ca(2+)</name>
        <dbReference type="ChEBI" id="CHEBI:29108"/>
        <label>1</label>
    </ligand>
</feature>
<feature type="binding site" evidence="2">
    <location>
        <position position="83"/>
    </location>
    <ligand>
        <name>Ca(2+)</name>
        <dbReference type="ChEBI" id="CHEBI:29108"/>
        <label>1</label>
    </ligand>
</feature>
<feature type="binding site" evidence="2">
    <location>
        <position position="171"/>
    </location>
    <ligand>
        <name>substrate</name>
    </ligand>
</feature>
<feature type="binding site" description="axial binding residue" evidence="2">
    <location>
        <position position="201"/>
    </location>
    <ligand>
        <name>heme b</name>
        <dbReference type="ChEBI" id="CHEBI:60344"/>
    </ligand>
    <ligandPart>
        <name>Fe</name>
        <dbReference type="ChEBI" id="CHEBI:18248"/>
    </ligandPart>
</feature>
<feature type="binding site" evidence="2">
    <location>
        <position position="202"/>
    </location>
    <ligand>
        <name>Ca(2+)</name>
        <dbReference type="ChEBI" id="CHEBI:29108"/>
        <label>2</label>
    </ligand>
</feature>
<feature type="binding site" evidence="2">
    <location>
        <position position="250"/>
    </location>
    <ligand>
        <name>Ca(2+)</name>
        <dbReference type="ChEBI" id="CHEBI:29108"/>
        <label>2</label>
    </ligand>
</feature>
<feature type="binding site" evidence="2">
    <location>
        <position position="253"/>
    </location>
    <ligand>
        <name>Ca(2+)</name>
        <dbReference type="ChEBI" id="CHEBI:29108"/>
        <label>2</label>
    </ligand>
</feature>
<feature type="binding site" evidence="2">
    <location>
        <position position="258"/>
    </location>
    <ligand>
        <name>Ca(2+)</name>
        <dbReference type="ChEBI" id="CHEBI:29108"/>
        <label>2</label>
    </ligand>
</feature>
<feature type="site" description="Transition state stabilizer" evidence="2">
    <location>
        <position position="69"/>
    </location>
</feature>
<feature type="glycosylation site" description="N-linked (GlcNAc...) asparagine" evidence="1">
    <location>
        <position position="174"/>
    </location>
</feature>
<feature type="glycosylation site" description="N-linked (GlcNAc...) asparagine" evidence="1">
    <location>
        <position position="238"/>
    </location>
</feature>
<feature type="glycosylation site" description="N-linked (GlcNAc...) asparagine" evidence="1">
    <location>
        <position position="282"/>
    </location>
</feature>
<feature type="glycosylation site" description="N-linked (GlcNAc...) asparagine" evidence="1">
    <location>
        <position position="294"/>
    </location>
</feature>
<feature type="disulfide bond" evidence="2">
    <location>
        <begin position="42"/>
        <end position="123"/>
    </location>
</feature>
<feature type="disulfide bond" evidence="2">
    <location>
        <begin position="75"/>
        <end position="80"/>
    </location>
</feature>
<feature type="disulfide bond" evidence="2">
    <location>
        <begin position="129"/>
        <end position="326"/>
    </location>
</feature>
<feature type="disulfide bond" evidence="2">
    <location>
        <begin position="208"/>
        <end position="236"/>
    </location>
</feature>
<feature type="sequence conflict" description="In Ref. 4; AAM65654." evidence="4" ref="4">
    <original>L</original>
    <variation>F</variation>
    <location>
        <position position="16"/>
    </location>
</feature>
<sequence length="334" mass="37014">MSNMQFSRGFNPFVILFCLAVVAPIISADVAILRTDYYQKTCPDFHKIVREAVTTKQVQQPTTAAGTLRLFFHDCFLEGCDASVLIATNSFNKAERDDDLNDSLPGDAFDIVTRIKTALELSCPGVVSCADILAQATRDLVTMVGGPYFDVKLGRKDGFESKAHKVRGNVPMANQTVPDIHGIFKKNGFSLREMVALSGAHTIGFSHCKEFSDRLYGSRADKEINPRFAAALKDLCKNHTVDDTIAAFNDVMTPGKFDNMYFKNLKRGLGLLASDHILIKDNSTKPFVDLYATNETAFFEDFARAMEKLGTVGVKGDKDGEVRRRCDHFNNLNV</sequence>